<comment type="function">
    <text evidence="1">One of the primary rRNA binding proteins, this protein initially binds near the 5'-end of the 23S rRNA. It is important during the early stages of 50S assembly. It makes multiple contacts with different domains of the 23S rRNA in the assembled 50S subunit and ribosome.</text>
</comment>
<comment type="function">
    <text evidence="1">Forms part of the polypeptide exit tunnel.</text>
</comment>
<comment type="subunit">
    <text evidence="1">Part of the 50S ribosomal subunit.</text>
</comment>
<comment type="similarity">
    <text evidence="1">Belongs to the universal ribosomal protein uL4 family.</text>
</comment>
<dbReference type="EMBL" id="CP001104">
    <property type="protein sequence ID" value="ACR71336.1"/>
    <property type="molecule type" value="Genomic_DNA"/>
</dbReference>
<dbReference type="RefSeq" id="WP_012738573.1">
    <property type="nucleotide sequence ID" value="NC_012778.1"/>
</dbReference>
<dbReference type="SMR" id="C4Z2T1"/>
<dbReference type="STRING" id="515620.EUBELI_00300"/>
<dbReference type="GeneID" id="41355073"/>
<dbReference type="KEGG" id="eel:EUBELI_00300"/>
<dbReference type="eggNOG" id="COG0088">
    <property type="taxonomic scope" value="Bacteria"/>
</dbReference>
<dbReference type="HOGENOM" id="CLU_041575_5_2_9"/>
<dbReference type="Proteomes" id="UP000001476">
    <property type="component" value="Chromosome"/>
</dbReference>
<dbReference type="GO" id="GO:1990904">
    <property type="term" value="C:ribonucleoprotein complex"/>
    <property type="evidence" value="ECO:0007669"/>
    <property type="project" value="UniProtKB-KW"/>
</dbReference>
<dbReference type="GO" id="GO:0005840">
    <property type="term" value="C:ribosome"/>
    <property type="evidence" value="ECO:0007669"/>
    <property type="project" value="UniProtKB-KW"/>
</dbReference>
<dbReference type="GO" id="GO:0019843">
    <property type="term" value="F:rRNA binding"/>
    <property type="evidence" value="ECO:0007669"/>
    <property type="project" value="UniProtKB-UniRule"/>
</dbReference>
<dbReference type="GO" id="GO:0003735">
    <property type="term" value="F:structural constituent of ribosome"/>
    <property type="evidence" value="ECO:0007669"/>
    <property type="project" value="InterPro"/>
</dbReference>
<dbReference type="GO" id="GO:0006412">
    <property type="term" value="P:translation"/>
    <property type="evidence" value="ECO:0007669"/>
    <property type="project" value="UniProtKB-UniRule"/>
</dbReference>
<dbReference type="Gene3D" id="3.40.1370.10">
    <property type="match status" value="1"/>
</dbReference>
<dbReference type="HAMAP" id="MF_01328_B">
    <property type="entry name" value="Ribosomal_uL4_B"/>
    <property type="match status" value="1"/>
</dbReference>
<dbReference type="InterPro" id="IPR002136">
    <property type="entry name" value="Ribosomal_uL4"/>
</dbReference>
<dbReference type="InterPro" id="IPR013005">
    <property type="entry name" value="Ribosomal_uL4-like"/>
</dbReference>
<dbReference type="InterPro" id="IPR023574">
    <property type="entry name" value="Ribosomal_uL4_dom_sf"/>
</dbReference>
<dbReference type="NCBIfam" id="TIGR03953">
    <property type="entry name" value="rplD_bact"/>
    <property type="match status" value="1"/>
</dbReference>
<dbReference type="PANTHER" id="PTHR10746">
    <property type="entry name" value="50S RIBOSOMAL PROTEIN L4"/>
    <property type="match status" value="1"/>
</dbReference>
<dbReference type="PANTHER" id="PTHR10746:SF6">
    <property type="entry name" value="LARGE RIBOSOMAL SUBUNIT PROTEIN UL4M"/>
    <property type="match status" value="1"/>
</dbReference>
<dbReference type="Pfam" id="PF00573">
    <property type="entry name" value="Ribosomal_L4"/>
    <property type="match status" value="1"/>
</dbReference>
<dbReference type="SUPFAM" id="SSF52166">
    <property type="entry name" value="Ribosomal protein L4"/>
    <property type="match status" value="1"/>
</dbReference>
<keyword id="KW-1185">Reference proteome</keyword>
<keyword id="KW-0687">Ribonucleoprotein</keyword>
<keyword id="KW-0689">Ribosomal protein</keyword>
<keyword id="KW-0694">RNA-binding</keyword>
<keyword id="KW-0699">rRNA-binding</keyword>
<evidence type="ECO:0000255" key="1">
    <source>
        <dbReference type="HAMAP-Rule" id="MF_01328"/>
    </source>
</evidence>
<evidence type="ECO:0000256" key="2">
    <source>
        <dbReference type="SAM" id="MobiDB-lite"/>
    </source>
</evidence>
<evidence type="ECO:0000305" key="3"/>
<organism>
    <name type="scientific">Lachnospira eligens (strain ATCC 27750 / DSM 3376 / VPI C15-48 / C15-B4)</name>
    <name type="common">Eubacterium eligens</name>
    <dbReference type="NCBI Taxonomy" id="515620"/>
    <lineage>
        <taxon>Bacteria</taxon>
        <taxon>Bacillati</taxon>
        <taxon>Bacillota</taxon>
        <taxon>Clostridia</taxon>
        <taxon>Lachnospirales</taxon>
        <taxon>Lachnospiraceae</taxon>
        <taxon>Lachnospira</taxon>
    </lineage>
</organism>
<proteinExistence type="inferred from homology"/>
<feature type="chain" id="PRO_1000214571" description="Large ribosomal subunit protein uL4">
    <location>
        <begin position="1"/>
        <end position="206"/>
    </location>
</feature>
<feature type="region of interest" description="Disordered" evidence="2">
    <location>
        <begin position="44"/>
        <end position="87"/>
    </location>
</feature>
<name>RL4_LACE2</name>
<accession>C4Z2T1</accession>
<sequence length="206" mass="22588">MANVSVYNIEGKEVGSIELNDAVFGVEVNEHLVHMAVVNQLANNRQGTQSAKTRSEVSGGGRKPWRQKGTGHARQGSTRSPQWTGGGVVFAPKPRDYSFKMNKKEKRIALLSALSSKVADNKIVVLDAFNLDEIKTKKFAEVMSNLKVDKALVVIEGENKNVVLSGRNIPTVKVSATNEINTYDVLKYETLVVTKAAVEKLEEVYA</sequence>
<reference key="1">
    <citation type="journal article" date="2009" name="Proc. Natl. Acad. Sci. U.S.A.">
        <title>Characterizing a model human gut microbiota composed of members of its two dominant bacterial phyla.</title>
        <authorList>
            <person name="Mahowald M.A."/>
            <person name="Rey F.E."/>
            <person name="Seedorf H."/>
            <person name="Turnbaugh P.J."/>
            <person name="Fulton R.S."/>
            <person name="Wollam A."/>
            <person name="Shah N."/>
            <person name="Wang C."/>
            <person name="Magrini V."/>
            <person name="Wilson R.K."/>
            <person name="Cantarel B.L."/>
            <person name="Coutinho P.M."/>
            <person name="Henrissat B."/>
            <person name="Crock L.W."/>
            <person name="Russell A."/>
            <person name="Verberkmoes N.C."/>
            <person name="Hettich R.L."/>
            <person name="Gordon J.I."/>
        </authorList>
    </citation>
    <scope>NUCLEOTIDE SEQUENCE [LARGE SCALE GENOMIC DNA]</scope>
    <source>
        <strain>ATCC 27750 / DSM 3376 / VPI C15-48 / C15-B4</strain>
    </source>
</reference>
<gene>
    <name evidence="1" type="primary">rplD</name>
    <name type="ordered locus">EUBELI_00300</name>
</gene>
<protein>
    <recommendedName>
        <fullName evidence="1">Large ribosomal subunit protein uL4</fullName>
    </recommendedName>
    <alternativeName>
        <fullName evidence="3">50S ribosomal protein L4</fullName>
    </alternativeName>
</protein>